<proteinExistence type="evidence at transcript level"/>
<name>TMC2_HUMAN</name>
<dbReference type="EMBL" id="AF417580">
    <property type="protein sequence ID" value="AAL86401.2"/>
    <property type="molecule type" value="mRNA"/>
</dbReference>
<dbReference type="EMBL" id="AK094789">
    <property type="protein sequence ID" value="BAC04423.1"/>
    <property type="status" value="ALT_INIT"/>
    <property type="molecule type" value="mRNA"/>
</dbReference>
<dbReference type="EMBL" id="AK127751">
    <property type="status" value="NOT_ANNOTATED_CDS"/>
    <property type="molecule type" value="mRNA"/>
</dbReference>
<dbReference type="EMBL" id="AL049712">
    <property type="status" value="NOT_ANNOTATED_CDS"/>
    <property type="molecule type" value="Genomic_DNA"/>
</dbReference>
<dbReference type="EMBL" id="AY358613">
    <property type="protein sequence ID" value="AAQ88976.1"/>
    <property type="status" value="ALT_INIT"/>
    <property type="molecule type" value="mRNA"/>
</dbReference>
<dbReference type="CCDS" id="CCDS13029.2">
    <molecule id="Q8TDI7-1"/>
</dbReference>
<dbReference type="RefSeq" id="NP_542789.2">
    <molecule id="Q8TDI7-1"/>
    <property type="nucleotide sequence ID" value="NM_080751.3"/>
</dbReference>
<dbReference type="SMR" id="Q8TDI7"/>
<dbReference type="BioGRID" id="125589">
    <property type="interactions" value="1"/>
</dbReference>
<dbReference type="FunCoup" id="Q8TDI7">
    <property type="interactions" value="2"/>
</dbReference>
<dbReference type="IntAct" id="Q8TDI7">
    <property type="interactions" value="1"/>
</dbReference>
<dbReference type="STRING" id="9606.ENSP00000351732"/>
<dbReference type="GlyGen" id="Q8TDI7">
    <property type="glycosylation" value="1 site"/>
</dbReference>
<dbReference type="iPTMnet" id="Q8TDI7"/>
<dbReference type="PhosphoSitePlus" id="Q8TDI7"/>
<dbReference type="BioMuta" id="TMC2"/>
<dbReference type="DMDM" id="313104275"/>
<dbReference type="jPOST" id="Q8TDI7"/>
<dbReference type="MassIVE" id="Q8TDI7"/>
<dbReference type="PaxDb" id="9606-ENSP00000351732"/>
<dbReference type="PeptideAtlas" id="Q8TDI7"/>
<dbReference type="Antibodypedia" id="23203">
    <property type="antibodies" value="66 antibodies from 16 providers"/>
</dbReference>
<dbReference type="DNASU" id="117532"/>
<dbReference type="Ensembl" id="ENST00000358864.2">
    <molecule id="Q8TDI7-1"/>
    <property type="protein sequence ID" value="ENSP00000351732.1"/>
    <property type="gene ID" value="ENSG00000149488.14"/>
</dbReference>
<dbReference type="GeneID" id="117532"/>
<dbReference type="KEGG" id="hsa:117532"/>
<dbReference type="MANE-Select" id="ENST00000358864.2">
    <property type="protein sequence ID" value="ENSP00000351732.1"/>
    <property type="RefSeq nucleotide sequence ID" value="NM_080751.3"/>
    <property type="RefSeq protein sequence ID" value="NP_542789.2"/>
</dbReference>
<dbReference type="UCSC" id="uc002wgf.1">
    <molecule id="Q8TDI7-1"/>
    <property type="organism name" value="human"/>
</dbReference>
<dbReference type="AGR" id="HGNC:16527"/>
<dbReference type="CTD" id="117532"/>
<dbReference type="DisGeNET" id="117532"/>
<dbReference type="GeneCards" id="TMC2"/>
<dbReference type="HGNC" id="HGNC:16527">
    <property type="gene designation" value="TMC2"/>
</dbReference>
<dbReference type="HPA" id="ENSG00000149488">
    <property type="expression patterns" value="Tissue enhanced (brain, pituitary gland)"/>
</dbReference>
<dbReference type="MIM" id="606707">
    <property type="type" value="gene"/>
</dbReference>
<dbReference type="neXtProt" id="NX_Q8TDI7"/>
<dbReference type="OpenTargets" id="ENSG00000149488"/>
<dbReference type="PharmGKB" id="PA38158"/>
<dbReference type="VEuPathDB" id="HostDB:ENSG00000149488"/>
<dbReference type="eggNOG" id="ENOG502QVCF">
    <property type="taxonomic scope" value="Eukaryota"/>
</dbReference>
<dbReference type="GeneTree" id="ENSGT01050000244942"/>
<dbReference type="HOGENOM" id="CLU_013958_2_0_1"/>
<dbReference type="InParanoid" id="Q8TDI7"/>
<dbReference type="OMA" id="TMRSKPW"/>
<dbReference type="OrthoDB" id="5831905at2759"/>
<dbReference type="PAN-GO" id="Q8TDI7">
    <property type="GO annotations" value="4 GO annotations based on evolutionary models"/>
</dbReference>
<dbReference type="PhylomeDB" id="Q8TDI7"/>
<dbReference type="TreeFam" id="TF313462"/>
<dbReference type="PathwayCommons" id="Q8TDI7"/>
<dbReference type="Reactome" id="R-HSA-9662360">
    <property type="pathway name" value="Sensory processing of sound by inner hair cells of the cochlea"/>
</dbReference>
<dbReference type="Reactome" id="R-HSA-9662361">
    <property type="pathway name" value="Sensory processing of sound by outer hair cells of the cochlea"/>
</dbReference>
<dbReference type="SignaLink" id="Q8TDI7"/>
<dbReference type="SIGNOR" id="Q8TDI7"/>
<dbReference type="BioGRID-ORCS" id="117532">
    <property type="hits" value="15 hits in 1138 CRISPR screens"/>
</dbReference>
<dbReference type="ChiTaRS" id="TMC2">
    <property type="organism name" value="human"/>
</dbReference>
<dbReference type="GeneWiki" id="TMC2"/>
<dbReference type="GenomeRNAi" id="117532"/>
<dbReference type="Pharos" id="Q8TDI7">
    <property type="development level" value="Tbio"/>
</dbReference>
<dbReference type="PRO" id="PR:Q8TDI7"/>
<dbReference type="Proteomes" id="UP000005640">
    <property type="component" value="Chromosome 20"/>
</dbReference>
<dbReference type="RNAct" id="Q8TDI7">
    <property type="molecule type" value="protein"/>
</dbReference>
<dbReference type="Bgee" id="ENSG00000149488">
    <property type="expression patterns" value="Expressed in cerebellar hemisphere and 78 other cell types or tissues"/>
</dbReference>
<dbReference type="ExpressionAtlas" id="Q8TDI7">
    <property type="expression patterns" value="baseline and differential"/>
</dbReference>
<dbReference type="GO" id="GO:0032437">
    <property type="term" value="C:cuticular plate"/>
    <property type="evidence" value="ECO:0000250"/>
    <property type="project" value="UniProtKB"/>
</dbReference>
<dbReference type="GO" id="GO:0005886">
    <property type="term" value="C:plasma membrane"/>
    <property type="evidence" value="ECO:0007669"/>
    <property type="project" value="UniProtKB-SubCell"/>
</dbReference>
<dbReference type="GO" id="GO:0032420">
    <property type="term" value="C:stereocilium"/>
    <property type="evidence" value="ECO:0000250"/>
    <property type="project" value="UniProtKB"/>
</dbReference>
<dbReference type="GO" id="GO:0032426">
    <property type="term" value="C:stereocilium tip"/>
    <property type="evidence" value="ECO:0007669"/>
    <property type="project" value="Ensembl"/>
</dbReference>
<dbReference type="GO" id="GO:0005262">
    <property type="term" value="F:calcium channel activity"/>
    <property type="evidence" value="ECO:0000250"/>
    <property type="project" value="UniProtKB"/>
</dbReference>
<dbReference type="GO" id="GO:0008381">
    <property type="term" value="F:mechanosensitive monoatomic ion channel activity"/>
    <property type="evidence" value="ECO:0000250"/>
    <property type="project" value="UniProtKB"/>
</dbReference>
<dbReference type="GO" id="GO:0005245">
    <property type="term" value="F:voltage-gated calcium channel activity"/>
    <property type="evidence" value="ECO:0000318"/>
    <property type="project" value="GO_Central"/>
</dbReference>
<dbReference type="GO" id="GO:0050910">
    <property type="term" value="P:detection of mechanical stimulus involved in sensory perception of sound"/>
    <property type="evidence" value="ECO:0000315"/>
    <property type="project" value="UniProtKB"/>
</dbReference>
<dbReference type="GO" id="GO:1903169">
    <property type="term" value="P:regulation of calcium ion transmembrane transport"/>
    <property type="evidence" value="ECO:0007669"/>
    <property type="project" value="Ensembl"/>
</dbReference>
<dbReference type="GO" id="GO:0060005">
    <property type="term" value="P:vestibular reflex"/>
    <property type="evidence" value="ECO:0000318"/>
    <property type="project" value="GO_Central"/>
</dbReference>
<dbReference type="InterPro" id="IPR038900">
    <property type="entry name" value="TMC"/>
</dbReference>
<dbReference type="InterPro" id="IPR012496">
    <property type="entry name" value="TMC_dom"/>
</dbReference>
<dbReference type="PANTHER" id="PTHR23302:SF17">
    <property type="entry name" value="TRANSMEMBRANE CHANNEL-LIKE PROTEIN 2"/>
    <property type="match status" value="1"/>
</dbReference>
<dbReference type="PANTHER" id="PTHR23302">
    <property type="entry name" value="TRANSMEMBRANE CHANNEL-RELATED"/>
    <property type="match status" value="1"/>
</dbReference>
<dbReference type="Pfam" id="PF07810">
    <property type="entry name" value="TMC"/>
    <property type="match status" value="1"/>
</dbReference>
<keyword id="KW-0025">Alternative splicing</keyword>
<keyword id="KW-1003">Cell membrane</keyword>
<keyword id="KW-0407">Ion channel</keyword>
<keyword id="KW-0406">Ion transport</keyword>
<keyword id="KW-0472">Membrane</keyword>
<keyword id="KW-1185">Reference proteome</keyword>
<keyword id="KW-0812">Transmembrane</keyword>
<keyword id="KW-1133">Transmembrane helix</keyword>
<keyword id="KW-0813">Transport</keyword>
<comment type="function">
    <text evidence="2 3 6">Pore-forming subunit of the mechanotransducer (MET) non-selective cation channel complex located at the tips of stereocilia of cochlear hair cells and that mediates sensory transduction in the auditory system (PubMed:11850618). The MET complex is composed of two dimeric pore-forming ion-conducting transmembrane TMC (TMC1 or TMC2) subunits, and aided by several auxiliary proteins including LHFPL5, TMIE, CIB2/3 and TOMT, and the tip-link PCDH15. MET channel is activated by tension in the tip-link extending from the side wall of one stereocilium to the tip of the adjacent shorter stereocilium, where the channel is located (By similarity). TMC2 MET channel is highly permeable to calcium and likely transports monovalent cations. Also involved in vestibular hair cell transduction current of the mammalian inner ear (By similarity).</text>
</comment>
<comment type="catalytic activity">
    <reaction evidence="2">
        <text>Ca(2+)(in) = Ca(2+)(out)</text>
        <dbReference type="Rhea" id="RHEA:29671"/>
        <dbReference type="ChEBI" id="CHEBI:29108"/>
    </reaction>
</comment>
<comment type="subunit">
    <text evidence="2">Forms the MET channel composed of TMC dimer (TMC1 or TMC2), TMIE, TOMT, CIB (CIB2 or CIB3), LHFPL5 and PDH15. The interaction of TMC1 and TMC2 with TOMT is required for the transportation of TMC1/2 into the stereocilia of hair cells. Interacts (via N-terminus) with both isoforms CD1 and CD3 of PCDH15. Can form a heterodimer with TMC1, TMC5 or TMC7.</text>
</comment>
<comment type="subcellular location">
    <subcellularLocation>
        <location evidence="1">Cell membrane</location>
        <topology evidence="9">Multi-pass membrane protein</topology>
    </subcellularLocation>
    <text evidence="2">Localized to the stereocilia tips of the cochlear hair cells and plasma membranes of cuticular plates.</text>
</comment>
<comment type="alternative products">
    <event type="alternative splicing"/>
    <isoform>
        <id>Q8TDI7-1</id>
        <name>1</name>
        <sequence type="displayed"/>
    </isoform>
    <isoform>
        <id>Q8TDI7-3</id>
        <name>2</name>
        <sequence type="described" ref="VSP_015281 VSP_015282"/>
    </isoform>
    <isoform>
        <id>Q8TDI7-4</id>
        <name>3</name>
        <sequence type="described" ref="VSP_015279 VSP_015283 VSP_015284"/>
    </isoform>
</comment>
<comment type="tissue specificity">
    <text>Detected in fetal cochlea.</text>
</comment>
<comment type="similarity">
    <text evidence="9">Belongs to the TMC family.</text>
</comment>
<comment type="sequence caution" evidence="9">
    <conflict type="erroneous initiation">
        <sequence resource="EMBL-CDS" id="AAQ88976"/>
    </conflict>
    <text>Truncated N-terminus.</text>
</comment>
<comment type="sequence caution" evidence="9">
    <conflict type="erroneous initiation">
        <sequence resource="EMBL-CDS" id="BAC04423"/>
    </conflict>
    <text>Truncated N-terminus.</text>
</comment>
<evidence type="ECO:0000250" key="1">
    <source>
        <dbReference type="UniProtKB" id="E7FFT2"/>
    </source>
</evidence>
<evidence type="ECO:0000250" key="2">
    <source>
        <dbReference type="UniProtKB" id="Q8R4P4"/>
    </source>
</evidence>
<evidence type="ECO:0000250" key="3">
    <source>
        <dbReference type="UniProtKB" id="Q8R4P5"/>
    </source>
</evidence>
<evidence type="ECO:0000255" key="4"/>
<evidence type="ECO:0000256" key="5">
    <source>
        <dbReference type="SAM" id="MobiDB-lite"/>
    </source>
</evidence>
<evidence type="ECO:0000269" key="6">
    <source>
    </source>
</evidence>
<evidence type="ECO:0000303" key="7">
    <source>
    </source>
</evidence>
<evidence type="ECO:0000303" key="8">
    <source>
    </source>
</evidence>
<evidence type="ECO:0000305" key="9"/>
<evidence type="ECO:0000312" key="10">
    <source>
        <dbReference type="HGNC" id="HGNC:16527"/>
    </source>
</evidence>
<feature type="chain" id="PRO_0000185382" description="Transmembrane channel-like protein 2">
    <location>
        <begin position="1"/>
        <end position="906"/>
    </location>
</feature>
<feature type="topological domain" description="Cytoplasmic" evidence="4">
    <location>
        <begin position="1"/>
        <end position="263"/>
    </location>
</feature>
<feature type="transmembrane region" description="Helical" evidence="4">
    <location>
        <begin position="264"/>
        <end position="284"/>
    </location>
</feature>
<feature type="topological domain" description="Extracellular" evidence="4">
    <location>
        <begin position="285"/>
        <end position="336"/>
    </location>
</feature>
<feature type="transmembrane region" description="Helical" evidence="4">
    <location>
        <begin position="337"/>
        <end position="357"/>
    </location>
</feature>
<feature type="topological domain" description="Cytoplasmic" evidence="4">
    <location>
        <begin position="358"/>
        <end position="431"/>
    </location>
</feature>
<feature type="transmembrane region" description="Helical" evidence="4">
    <location>
        <begin position="432"/>
        <end position="452"/>
    </location>
</feature>
<feature type="topological domain" description="Extracellular" evidence="4">
    <location>
        <begin position="453"/>
        <end position="508"/>
    </location>
</feature>
<feature type="transmembrane region" description="Helical" evidence="4">
    <location>
        <begin position="509"/>
        <end position="529"/>
    </location>
</feature>
<feature type="topological domain" description="Cytoplasmic" evidence="4">
    <location>
        <begin position="530"/>
        <end position="693"/>
    </location>
</feature>
<feature type="transmembrane region" description="Helical" evidence="4">
    <location>
        <begin position="694"/>
        <end position="714"/>
    </location>
</feature>
<feature type="topological domain" description="Extracellular" evidence="4">
    <location>
        <begin position="715"/>
        <end position="750"/>
    </location>
</feature>
<feature type="transmembrane region" description="Helical" evidence="4">
    <location>
        <begin position="751"/>
        <end position="771"/>
    </location>
</feature>
<feature type="topological domain" description="Cytoplasmic" evidence="4">
    <location>
        <begin position="772"/>
        <end position="906"/>
    </location>
</feature>
<feature type="region of interest" description="Disordered" evidence="5">
    <location>
        <begin position="1"/>
        <end position="150"/>
    </location>
</feature>
<feature type="region of interest" description="Disordered" evidence="5">
    <location>
        <begin position="800"/>
        <end position="906"/>
    </location>
</feature>
<feature type="compositionally biased region" description="Basic residues" evidence="5">
    <location>
        <begin position="69"/>
        <end position="79"/>
    </location>
</feature>
<feature type="compositionally biased region" description="Basic and acidic residues" evidence="5">
    <location>
        <begin position="80"/>
        <end position="127"/>
    </location>
</feature>
<feature type="compositionally biased region" description="Low complexity" evidence="5">
    <location>
        <begin position="135"/>
        <end position="147"/>
    </location>
</feature>
<feature type="compositionally biased region" description="Polar residues" evidence="5">
    <location>
        <begin position="820"/>
        <end position="846"/>
    </location>
</feature>
<feature type="compositionally biased region" description="Polar residues" evidence="5">
    <location>
        <begin position="854"/>
        <end position="866"/>
    </location>
</feature>
<feature type="compositionally biased region" description="Polar residues" evidence="5">
    <location>
        <begin position="886"/>
        <end position="900"/>
    </location>
</feature>
<feature type="splice variant" id="VSP_015279" description="In isoform 3." evidence="7 8">
    <location>
        <begin position="1"/>
        <end position="644"/>
    </location>
</feature>
<feature type="splice variant" id="VSP_015281" description="In isoform 2." evidence="8">
    <original>PSYAEFDISGNVLGLIFNQGMIWMGSFYAPGLVGINVLRLL</original>
    <variation>VGHHFMDIPHKGISTIFFDTYSQMHSWAFHFFGSLMTVSAL</variation>
    <location>
        <begin position="625"/>
        <end position="665"/>
    </location>
</feature>
<feature type="splice variant" id="VSP_015282" description="In isoform 2." evidence="8">
    <location>
        <begin position="666"/>
        <end position="906"/>
    </location>
</feature>
<feature type="splice variant" id="VSP_015283" description="In isoform 3." evidence="7 8">
    <original>SGKNRMYDVLQETIENDFPTFLGKIFAFLANPGLIIPAILLMFLAIYYLNSVSKSLSRANAQLRKKIQVLREVEKSHKSV</original>
    <variation>RCRVSVAREHLPSRGSLLRGPRPRIPVLVSCQPVKGHGTLGESPMPFKRVFCQDGNVRSFCVCAVHFSSHQPPVAVECLK</variation>
    <location>
        <begin position="727"/>
        <end position="806"/>
    </location>
</feature>
<feature type="splice variant" id="VSP_015284" description="In isoform 3." evidence="7 8">
    <location>
        <begin position="807"/>
        <end position="906"/>
    </location>
</feature>
<feature type="sequence variant" id="VAR_023360" description="In dbSNP:rs6050063." evidence="6">
    <original>R</original>
    <variation>K</variation>
    <location>
        <position position="123"/>
    </location>
</feature>
<feature type="sequence variant" id="VAR_057281" description="In dbSNP:rs11908093.">
    <original>Q</original>
    <variation>R</variation>
    <location>
        <position position="205"/>
    </location>
</feature>
<feature type="sequence variant" id="VAR_057282" description="In dbSNP:rs34884202.">
    <original>W</original>
    <variation>R</variation>
    <location>
        <position position="217"/>
    </location>
</feature>
<feature type="sequence variant" id="VAR_030621" description="In dbSNP:rs16987592.">
    <original>S</original>
    <variation>C</variation>
    <location>
        <position position="573"/>
    </location>
</feature>
<feature type="sequence variant" id="VAR_057283" description="In dbSNP:rs16987592.">
    <original>S</original>
    <variation>C</variation>
    <location>
        <position position="589"/>
    </location>
</feature>
<feature type="sequence variant" id="VAR_030622" description="In dbSNP:rs768537423.">
    <original>E</original>
    <variation>Q</variation>
    <location>
        <position position="800"/>
    </location>
</feature>
<feature type="sequence variant" id="VAR_057284" description="In dbSNP:rs6115242.">
    <original>E</original>
    <variation>Q</variation>
    <location>
        <position position="816"/>
    </location>
</feature>
<reference key="1">
    <citation type="journal article" date="2002" name="Nat. Genet.">
        <title>Dominant and recessive deafness caused by mutations of a novel gene, TMC1, required for cochlear hair-cell function.</title>
        <authorList>
            <person name="Kurima K."/>
            <person name="Peters L.M."/>
            <person name="Yang Y."/>
            <person name="Riazuddin S."/>
            <person name="Ahmed Z.M."/>
            <person name="Naz S."/>
            <person name="Arnaud D."/>
            <person name="Drury S."/>
            <person name="Mo J."/>
            <person name="Makishima T."/>
            <person name="Ghosh M."/>
            <person name="Menon P.S.N."/>
            <person name="Deshmukh D."/>
            <person name="Oddoux C."/>
            <person name="Ostrer H."/>
            <person name="Khan S."/>
            <person name="Raizuddin S."/>
            <person name="Deininger P.L."/>
            <person name="Hampton L.L."/>
            <person name="Sullivan S.L."/>
            <person name="Battey J.F."/>
            <person name="Keats B.J.B."/>
            <person name="Wilcox E.R."/>
            <person name="Friedman T.B."/>
            <person name="Griffith A.J."/>
        </authorList>
    </citation>
    <scope>NUCLEOTIDE SEQUENCE [MRNA] (ISOFORM 1)</scope>
    <scope>VARIANT LYS-123</scope>
    <scope>FUNCTION</scope>
    <source>
        <tissue>Brain</tissue>
        <tissue>Inner ear</tissue>
        <tissue>Testis</tissue>
    </source>
</reference>
<reference key="2">
    <citation type="submission" date="2003-03" db="EMBL/GenBank/DDBJ databases">
        <authorList>
            <person name="Kurima K."/>
            <person name="Griffith A.J."/>
            <person name="Friedman T.B."/>
        </authorList>
    </citation>
    <scope>SEQUENCE REVISION</scope>
</reference>
<reference key="3">
    <citation type="journal article" date="2004" name="Nat. Genet.">
        <title>Complete sequencing and characterization of 21,243 full-length human cDNAs.</title>
        <authorList>
            <person name="Ota T."/>
            <person name="Suzuki Y."/>
            <person name="Nishikawa T."/>
            <person name="Otsuki T."/>
            <person name="Sugiyama T."/>
            <person name="Irie R."/>
            <person name="Wakamatsu A."/>
            <person name="Hayashi K."/>
            <person name="Sato H."/>
            <person name="Nagai K."/>
            <person name="Kimura K."/>
            <person name="Makita H."/>
            <person name="Sekine M."/>
            <person name="Obayashi M."/>
            <person name="Nishi T."/>
            <person name="Shibahara T."/>
            <person name="Tanaka T."/>
            <person name="Ishii S."/>
            <person name="Yamamoto J."/>
            <person name="Saito K."/>
            <person name="Kawai Y."/>
            <person name="Isono Y."/>
            <person name="Nakamura Y."/>
            <person name="Nagahari K."/>
            <person name="Murakami K."/>
            <person name="Yasuda T."/>
            <person name="Iwayanagi T."/>
            <person name="Wagatsuma M."/>
            <person name="Shiratori A."/>
            <person name="Sudo H."/>
            <person name="Hosoiri T."/>
            <person name="Kaku Y."/>
            <person name="Kodaira H."/>
            <person name="Kondo H."/>
            <person name="Sugawara M."/>
            <person name="Takahashi M."/>
            <person name="Kanda K."/>
            <person name="Yokoi T."/>
            <person name="Furuya T."/>
            <person name="Kikkawa E."/>
            <person name="Omura Y."/>
            <person name="Abe K."/>
            <person name="Kamihara K."/>
            <person name="Katsuta N."/>
            <person name="Sato K."/>
            <person name="Tanikawa M."/>
            <person name="Yamazaki M."/>
            <person name="Ninomiya K."/>
            <person name="Ishibashi T."/>
            <person name="Yamashita H."/>
            <person name="Murakawa K."/>
            <person name="Fujimori K."/>
            <person name="Tanai H."/>
            <person name="Kimata M."/>
            <person name="Watanabe M."/>
            <person name="Hiraoka S."/>
            <person name="Chiba Y."/>
            <person name="Ishida S."/>
            <person name="Ono Y."/>
            <person name="Takiguchi S."/>
            <person name="Watanabe S."/>
            <person name="Yosida M."/>
            <person name="Hotuta T."/>
            <person name="Kusano J."/>
            <person name="Kanehori K."/>
            <person name="Takahashi-Fujii A."/>
            <person name="Hara H."/>
            <person name="Tanase T.-O."/>
            <person name="Nomura Y."/>
            <person name="Togiya S."/>
            <person name="Komai F."/>
            <person name="Hara R."/>
            <person name="Takeuchi K."/>
            <person name="Arita M."/>
            <person name="Imose N."/>
            <person name="Musashino K."/>
            <person name="Yuuki H."/>
            <person name="Oshima A."/>
            <person name="Sasaki N."/>
            <person name="Aotsuka S."/>
            <person name="Yoshikawa Y."/>
            <person name="Matsunawa H."/>
            <person name="Ichihara T."/>
            <person name="Shiohata N."/>
            <person name="Sano S."/>
            <person name="Moriya S."/>
            <person name="Momiyama H."/>
            <person name="Satoh N."/>
            <person name="Takami S."/>
            <person name="Terashima Y."/>
            <person name="Suzuki O."/>
            <person name="Nakagawa S."/>
            <person name="Senoh A."/>
            <person name="Mizoguchi H."/>
            <person name="Goto Y."/>
            <person name="Shimizu F."/>
            <person name="Wakebe H."/>
            <person name="Hishigaki H."/>
            <person name="Watanabe T."/>
            <person name="Sugiyama A."/>
            <person name="Takemoto M."/>
            <person name="Kawakami B."/>
            <person name="Yamazaki M."/>
            <person name="Watanabe K."/>
            <person name="Kumagai A."/>
            <person name="Itakura S."/>
            <person name="Fukuzumi Y."/>
            <person name="Fujimori Y."/>
            <person name="Komiyama M."/>
            <person name="Tashiro H."/>
            <person name="Tanigami A."/>
            <person name="Fujiwara T."/>
            <person name="Ono T."/>
            <person name="Yamada K."/>
            <person name="Fujii Y."/>
            <person name="Ozaki K."/>
            <person name="Hirao M."/>
            <person name="Ohmori Y."/>
            <person name="Kawabata A."/>
            <person name="Hikiji T."/>
            <person name="Kobatake N."/>
            <person name="Inagaki H."/>
            <person name="Ikema Y."/>
            <person name="Okamoto S."/>
            <person name="Okitani R."/>
            <person name="Kawakami T."/>
            <person name="Noguchi S."/>
            <person name="Itoh T."/>
            <person name="Shigeta K."/>
            <person name="Senba T."/>
            <person name="Matsumura K."/>
            <person name="Nakajima Y."/>
            <person name="Mizuno T."/>
            <person name="Morinaga M."/>
            <person name="Sasaki M."/>
            <person name="Togashi T."/>
            <person name="Oyama M."/>
            <person name="Hata H."/>
            <person name="Watanabe M."/>
            <person name="Komatsu T."/>
            <person name="Mizushima-Sugano J."/>
            <person name="Satoh T."/>
            <person name="Shirai Y."/>
            <person name="Takahashi Y."/>
            <person name="Nakagawa K."/>
            <person name="Okumura K."/>
            <person name="Nagase T."/>
            <person name="Nomura N."/>
            <person name="Kikuchi H."/>
            <person name="Masuho Y."/>
            <person name="Yamashita R."/>
            <person name="Nakai K."/>
            <person name="Yada T."/>
            <person name="Nakamura Y."/>
            <person name="Ohara O."/>
            <person name="Isogai T."/>
            <person name="Sugano S."/>
        </authorList>
    </citation>
    <scope>NUCLEOTIDE SEQUENCE [LARGE SCALE MRNA] (ISOFORM 3)</scope>
    <scope>NUCLEOTIDE SEQUENCE [LARGE SCALE MRNA] OF 427-906 (ISOFORM 2)</scope>
    <source>
        <tissue>Brain</tissue>
    </source>
</reference>
<reference key="4">
    <citation type="journal article" date="2001" name="Nature">
        <title>The DNA sequence and comparative analysis of human chromosome 20.</title>
        <authorList>
            <person name="Deloukas P."/>
            <person name="Matthews L.H."/>
            <person name="Ashurst J.L."/>
            <person name="Burton J."/>
            <person name="Gilbert J.G.R."/>
            <person name="Jones M."/>
            <person name="Stavrides G."/>
            <person name="Almeida J.P."/>
            <person name="Babbage A.K."/>
            <person name="Bagguley C.L."/>
            <person name="Bailey J."/>
            <person name="Barlow K.F."/>
            <person name="Bates K.N."/>
            <person name="Beard L.M."/>
            <person name="Beare D.M."/>
            <person name="Beasley O.P."/>
            <person name="Bird C.P."/>
            <person name="Blakey S.E."/>
            <person name="Bridgeman A.M."/>
            <person name="Brown A.J."/>
            <person name="Buck D."/>
            <person name="Burrill W.D."/>
            <person name="Butler A.P."/>
            <person name="Carder C."/>
            <person name="Carter N.P."/>
            <person name="Chapman J.C."/>
            <person name="Clamp M."/>
            <person name="Clark G."/>
            <person name="Clark L.N."/>
            <person name="Clark S.Y."/>
            <person name="Clee C.M."/>
            <person name="Clegg S."/>
            <person name="Cobley V.E."/>
            <person name="Collier R.E."/>
            <person name="Connor R.E."/>
            <person name="Corby N.R."/>
            <person name="Coulson A."/>
            <person name="Coville G.J."/>
            <person name="Deadman R."/>
            <person name="Dhami P.D."/>
            <person name="Dunn M."/>
            <person name="Ellington A.G."/>
            <person name="Frankland J.A."/>
            <person name="Fraser A."/>
            <person name="French L."/>
            <person name="Garner P."/>
            <person name="Grafham D.V."/>
            <person name="Griffiths C."/>
            <person name="Griffiths M.N.D."/>
            <person name="Gwilliam R."/>
            <person name="Hall R.E."/>
            <person name="Hammond S."/>
            <person name="Harley J.L."/>
            <person name="Heath P.D."/>
            <person name="Ho S."/>
            <person name="Holden J.L."/>
            <person name="Howden P.J."/>
            <person name="Huckle E."/>
            <person name="Hunt A.R."/>
            <person name="Hunt S.E."/>
            <person name="Jekosch K."/>
            <person name="Johnson C.M."/>
            <person name="Johnson D."/>
            <person name="Kay M.P."/>
            <person name="Kimberley A.M."/>
            <person name="King A."/>
            <person name="Knights A."/>
            <person name="Laird G.K."/>
            <person name="Lawlor S."/>
            <person name="Lehvaeslaiho M.H."/>
            <person name="Leversha M.A."/>
            <person name="Lloyd C."/>
            <person name="Lloyd D.M."/>
            <person name="Lovell J.D."/>
            <person name="Marsh V.L."/>
            <person name="Martin S.L."/>
            <person name="McConnachie L.J."/>
            <person name="McLay K."/>
            <person name="McMurray A.A."/>
            <person name="Milne S.A."/>
            <person name="Mistry D."/>
            <person name="Moore M.J.F."/>
            <person name="Mullikin J.C."/>
            <person name="Nickerson T."/>
            <person name="Oliver K."/>
            <person name="Parker A."/>
            <person name="Patel R."/>
            <person name="Pearce T.A.V."/>
            <person name="Peck A.I."/>
            <person name="Phillimore B.J.C.T."/>
            <person name="Prathalingam S.R."/>
            <person name="Plumb R.W."/>
            <person name="Ramsay H."/>
            <person name="Rice C.M."/>
            <person name="Ross M.T."/>
            <person name="Scott C.E."/>
            <person name="Sehra H.K."/>
            <person name="Shownkeen R."/>
            <person name="Sims S."/>
            <person name="Skuce C.D."/>
            <person name="Smith M.L."/>
            <person name="Soderlund C."/>
            <person name="Steward C.A."/>
            <person name="Sulston J.E."/>
            <person name="Swann R.M."/>
            <person name="Sycamore N."/>
            <person name="Taylor R."/>
            <person name="Tee L."/>
            <person name="Thomas D.W."/>
            <person name="Thorpe A."/>
            <person name="Tracey A."/>
            <person name="Tromans A.C."/>
            <person name="Vaudin M."/>
            <person name="Wall M."/>
            <person name="Wallis J.M."/>
            <person name="Whitehead S.L."/>
            <person name="Whittaker P."/>
            <person name="Willey D.L."/>
            <person name="Williams L."/>
            <person name="Williams S.A."/>
            <person name="Wilming L."/>
            <person name="Wray P.W."/>
            <person name="Hubbard T."/>
            <person name="Durbin R.M."/>
            <person name="Bentley D.R."/>
            <person name="Beck S."/>
            <person name="Rogers J."/>
        </authorList>
    </citation>
    <scope>NUCLEOTIDE SEQUENCE [LARGE SCALE GENOMIC DNA]</scope>
</reference>
<reference key="5">
    <citation type="journal article" date="2003" name="Genome Res.">
        <title>The secreted protein discovery initiative (SPDI), a large-scale effort to identify novel human secreted and transmembrane proteins: a bioinformatics assessment.</title>
        <authorList>
            <person name="Clark H.F."/>
            <person name="Gurney A.L."/>
            <person name="Abaya E."/>
            <person name="Baker K."/>
            <person name="Baldwin D.T."/>
            <person name="Brush J."/>
            <person name="Chen J."/>
            <person name="Chow B."/>
            <person name="Chui C."/>
            <person name="Crowley C."/>
            <person name="Currell B."/>
            <person name="Deuel B."/>
            <person name="Dowd P."/>
            <person name="Eaton D."/>
            <person name="Foster J.S."/>
            <person name="Grimaldi C."/>
            <person name="Gu Q."/>
            <person name="Hass P.E."/>
            <person name="Heldens S."/>
            <person name="Huang A."/>
            <person name="Kim H.S."/>
            <person name="Klimowski L."/>
            <person name="Jin Y."/>
            <person name="Johnson S."/>
            <person name="Lee J."/>
            <person name="Lewis L."/>
            <person name="Liao D."/>
            <person name="Mark M.R."/>
            <person name="Robbie E."/>
            <person name="Sanchez C."/>
            <person name="Schoenfeld J."/>
            <person name="Seshagiri S."/>
            <person name="Simmons L."/>
            <person name="Singh J."/>
            <person name="Smith V."/>
            <person name="Stinson J."/>
            <person name="Vagts A."/>
            <person name="Vandlen R.L."/>
            <person name="Watanabe C."/>
            <person name="Wieand D."/>
            <person name="Woods K."/>
            <person name="Xie M.-H."/>
            <person name="Yansura D.G."/>
            <person name="Yi S."/>
            <person name="Yu G."/>
            <person name="Yuan J."/>
            <person name="Zhang M."/>
            <person name="Zhang Z."/>
            <person name="Goddard A.D."/>
            <person name="Wood W.I."/>
            <person name="Godowski P.J."/>
            <person name="Gray A.M."/>
        </authorList>
    </citation>
    <scope>NUCLEOTIDE SEQUENCE [LARGE SCALE MRNA] OF 693-906 (ISOFORM 3)</scope>
</reference>
<gene>
    <name evidence="10" type="primary">TMC2</name>
    <name type="synonym">C20orf145</name>
    <name type="ORF">UNQ907/PRO1928</name>
</gene>
<protein>
    <recommendedName>
        <fullName>Transmembrane channel-like protein 2</fullName>
    </recommendedName>
    <alternativeName>
        <fullName>Transmembrane cochlear-expressed protein 2</fullName>
    </alternativeName>
</protein>
<sequence>MSHQVKGLKEEARGGVKGRVKSGSPHTGDRLGRRSSSKRALKAEGTPGRRGAQRSQKERAGGSPSPGSPRRKQTGRRRHREELGEQERGEAERTCEGRRKRDERASFQERTAAPKREKEIPRREEKSKRQKKPRSSSLASSASGGESLSEEELAQILEQVEEKKKLIATMRSKPWPMAKKLTELREAQEFVEKYEGALGKGKGKQLYAYKMLMAKKWVKFKRDFDNFKTQCIPWEMKIKDIESHFGSSVASYFIFLRWMYGVNLVLFGLIFGLVIIPEVLMGMPYGSIPRKTVPRAEEEKAMDFSVLWDFEGYIKYSALFYGYYNNQRTIGWLRYRLPMAYFMVGVSVFGYSLIIVIRSMASNTQGSTGEGESDNFTFSFKMFTSWDYLIGNSETADNKYASITTSFKESIVDEQESNKEENIHLTRFLRVLANFLIICCLCGSGYLIYFVVKRSQQFSKMQNVSWYERNEVEIVMSLLGMFCPPLFETIAALENYHPRTGLKWQLGRIFALFLGNLYTFLLALMDDVHLKLANEETIKNITHWTLFNYYNSSGWNESVPRPPLHPADVPRGSCWETAVGIEFMRLTVSDMLVTYITILLGDFLRACFVRFMNYCWCWDLEAGFPSYAEFDISGNVLGLIFNQGMIWMGSFYAPGLVGINVLRLLTSMYFQCWAVMSSNVPHERVFKASRSNNFYMGLLLLVLFLSLLPVAYTIMSLPPSFDCGPFSGKNRMYDVLQETIENDFPTFLGKIFAFLANPGLIIPAILLMFLAIYYLNSVSKSLSRANAQLRKKIQVLREVEKSHKSVKGKATARDSEDTPKSSSKNATQLQLTKEETTPPSASQSQAMDKKAQGPGTSNSASRTTLPASGHLPISRPPGIGPDSGHAPSQTHPWRSASGKSAQRPPH</sequence>
<organism>
    <name type="scientific">Homo sapiens</name>
    <name type="common">Human</name>
    <dbReference type="NCBI Taxonomy" id="9606"/>
    <lineage>
        <taxon>Eukaryota</taxon>
        <taxon>Metazoa</taxon>
        <taxon>Chordata</taxon>
        <taxon>Craniata</taxon>
        <taxon>Vertebrata</taxon>
        <taxon>Euteleostomi</taxon>
        <taxon>Mammalia</taxon>
        <taxon>Eutheria</taxon>
        <taxon>Euarchontoglires</taxon>
        <taxon>Primates</taxon>
        <taxon>Haplorrhini</taxon>
        <taxon>Catarrhini</taxon>
        <taxon>Hominidae</taxon>
        <taxon>Homo</taxon>
    </lineage>
</organism>
<accession>Q8TDI7</accession>
<accession>Q5JXT0</accession>
<accession>Q5JXT1</accession>
<accession>Q6UWW4</accession>
<accession>Q6ZS41</accession>
<accession>Q8N9F3</accession>
<accession>Q9BYN2</accession>
<accession>Q9BYN3</accession>
<accession>Q9BYN4</accession>
<accession>Q9BYN5</accession>